<feature type="signal peptide">
    <location>
        <begin position="1"/>
        <end position="18"/>
    </location>
</feature>
<feature type="chain" id="PRO_0000012595" description="Glycerophosphodiester phosphodiesterase">
    <location>
        <begin position="19"/>
        <end position="364"/>
    </location>
</feature>
<feature type="domain" description="GP-PDE">
    <location>
        <begin position="35"/>
        <end position="360"/>
    </location>
</feature>
<feature type="active site" description="Proton acceptor" evidence="2">
    <location>
        <position position="40"/>
    </location>
</feature>
<feature type="active site" description="Proton donor" evidence="2">
    <location>
        <position position="82"/>
    </location>
</feature>
<feature type="binding site" evidence="1">
    <location>
        <position position="67"/>
    </location>
    <ligand>
        <name>Ca(2+)</name>
        <dbReference type="ChEBI" id="CHEBI:29108"/>
    </ligand>
</feature>
<feature type="binding site" evidence="1">
    <location>
        <position position="69"/>
    </location>
    <ligand>
        <name>Ca(2+)</name>
        <dbReference type="ChEBI" id="CHEBI:29108"/>
    </ligand>
</feature>
<feature type="binding site" evidence="1">
    <location>
        <position position="175"/>
    </location>
    <ligand>
        <name>Ca(2+)</name>
        <dbReference type="ChEBI" id="CHEBI:29108"/>
    </ligand>
</feature>
<feature type="lipid moiety-binding region" description="N-palmitoyl cysteine" evidence="3 4">
    <location>
        <position position="19"/>
    </location>
</feature>
<feature type="lipid moiety-binding region" description="S-diacylglycerol cysteine" evidence="3 4">
    <location>
        <position position="19"/>
    </location>
</feature>
<feature type="sequence variant" description="In strain: NCTC 8468.">
    <original>A</original>
    <variation>T</variation>
    <location>
        <position position="13"/>
    </location>
</feature>
<feature type="sequence variant" description="In strain: NCTC 8468.">
    <original>L</original>
    <variation>V</variation>
    <location>
        <position position="16"/>
    </location>
</feature>
<feature type="sequence variant" description="In strain: NCTC 8468.">
    <original>N</original>
    <variation>S</variation>
    <location>
        <position position="25"/>
    </location>
</feature>
<feature type="sequence variant" description="In strain: 6-7626.">
    <original>N</original>
    <variation>K</variation>
    <location>
        <position position="28"/>
    </location>
</feature>
<feature type="sequence variant" description="In strain: NCTC 8468.">
    <original>D</original>
    <variation>H</variation>
    <location>
        <position position="34"/>
    </location>
</feature>
<feature type="sequence variant" description="In strain: Eagan, 3639, 3640, 6-7626, HK695 and Minna.">
    <original>H</original>
    <variation>Q</variation>
    <location>
        <position position="62"/>
    </location>
</feature>
<feature type="sequence variant" description="In strain: Eagan, 3639, 3640, NCTC 8468, 6-7626, HK695 and Minna.">
    <original>S</original>
    <variation>A</variation>
    <location>
        <position position="63"/>
    </location>
</feature>
<feature type="sequence variant" description="In strain: Eagan, 3639, 3640, NCTC 8468, 6-7626, HK695 and Minna.">
    <original>Y</original>
    <variation>H</variation>
    <location>
        <position position="98"/>
    </location>
</feature>
<feature type="sequence variant" description="In strain: NCTC 8468.">
    <original>R</original>
    <variation>H</variation>
    <location>
        <position position="99"/>
    </location>
</feature>
<feature type="sequence variant" description="In strain: 6-7626.">
    <original>K</original>
    <variation>Q</variation>
    <location>
        <position position="144"/>
    </location>
</feature>
<feature type="sequence variant" description="In strain: 6-7626.">
    <original>K</original>
    <variation>R</variation>
    <location>
        <position position="168"/>
    </location>
</feature>
<feature type="sequence variant" description="In strain: Eagan, 3639, 3640, NCTC 8468, 6-7626, HK695 and Minna.">
    <original>T</original>
    <variation>A</variation>
    <location>
        <position position="191"/>
    </location>
</feature>
<feature type="sequence variant" description="In strain: 6-7626.">
    <original>P</original>
    <variation>S</variation>
    <location>
        <position position="253"/>
    </location>
</feature>
<feature type="sequence variant" description="In strain: 6-7626.">
    <original>Q</original>
    <variation>K</variation>
    <location>
        <position position="310"/>
    </location>
</feature>
<feature type="sequence variant" description="In strain: Eagan, 3639, NCTC 8468, 6-7626, HK695 and Minna.">
    <original>E</original>
    <variation>A</variation>
    <location>
        <position position="327"/>
    </location>
</feature>
<feature type="sequence variant" description="In strain: Eagan, 3640, HK695 and Minna.">
    <original>A</original>
    <variation>V</variation>
    <location>
        <position position="338"/>
    </location>
</feature>
<feature type="sequence variant" description="In strain: 6-7626.">
    <original>K</original>
    <variation>E</variation>
    <location>
        <position position="364"/>
    </location>
</feature>
<feature type="strand" evidence="6">
    <location>
        <begin position="36"/>
        <end position="39"/>
    </location>
</feature>
<feature type="turn" evidence="6">
    <location>
        <begin position="40"/>
        <end position="46"/>
    </location>
</feature>
<feature type="helix" evidence="6">
    <location>
        <begin position="52"/>
        <end position="60"/>
    </location>
</feature>
<feature type="strand" evidence="6">
    <location>
        <begin position="64"/>
        <end position="72"/>
    </location>
</feature>
<feature type="strand" evidence="6">
    <location>
        <begin position="78"/>
        <end position="80"/>
    </location>
</feature>
<feature type="strand" evidence="6">
    <location>
        <begin position="82"/>
        <end position="86"/>
    </location>
</feature>
<feature type="turn" evidence="6">
    <location>
        <begin position="87"/>
        <end position="89"/>
    </location>
</feature>
<feature type="helix" evidence="6">
    <location>
        <begin position="92"/>
        <end position="95"/>
    </location>
</feature>
<feature type="helix" evidence="6">
    <location>
        <begin position="108"/>
        <end position="110"/>
    </location>
</feature>
<feature type="helix" evidence="6">
    <location>
        <begin position="113"/>
        <end position="117"/>
    </location>
</feature>
<feature type="strand" evidence="6">
    <location>
        <begin position="125"/>
        <end position="128"/>
    </location>
</feature>
<feature type="strand" evidence="6">
    <location>
        <begin position="131"/>
        <end position="136"/>
    </location>
</feature>
<feature type="helix" evidence="6">
    <location>
        <begin position="152"/>
        <end position="166"/>
    </location>
</feature>
<feature type="strand" evidence="6">
    <location>
        <begin position="171"/>
        <end position="176"/>
    </location>
</feature>
<feature type="helix" evidence="6">
    <location>
        <begin position="179"/>
        <end position="184"/>
    </location>
</feature>
<feature type="helix" evidence="6">
    <location>
        <begin position="189"/>
        <end position="199"/>
    </location>
</feature>
<feature type="strand" evidence="6">
    <location>
        <begin position="207"/>
        <end position="214"/>
    </location>
</feature>
<feature type="helix" evidence="6">
    <location>
        <begin position="216"/>
        <end position="224"/>
    </location>
</feature>
<feature type="helix" evidence="6">
    <location>
        <begin position="226"/>
        <end position="230"/>
    </location>
</feature>
<feature type="strand" evidence="6">
    <location>
        <begin position="235"/>
        <end position="239"/>
    </location>
</feature>
<feature type="helix" evidence="6">
    <location>
        <begin position="243"/>
        <end position="245"/>
    </location>
</feature>
<feature type="strand" evidence="6">
    <location>
        <begin position="249"/>
        <end position="251"/>
    </location>
</feature>
<feature type="strand" evidence="6">
    <location>
        <begin position="257"/>
        <end position="259"/>
    </location>
</feature>
<feature type="helix" evidence="6">
    <location>
        <begin position="263"/>
        <end position="266"/>
    </location>
</feature>
<feature type="turn" evidence="6">
    <location>
        <begin position="268"/>
        <end position="270"/>
    </location>
</feature>
<feature type="helix" evidence="6">
    <location>
        <begin position="271"/>
        <end position="275"/>
    </location>
</feature>
<feature type="strand" evidence="6">
    <location>
        <begin position="279"/>
        <end position="282"/>
    </location>
</feature>
<feature type="helix" evidence="6">
    <location>
        <begin position="285"/>
        <end position="287"/>
    </location>
</feature>
<feature type="turn" evidence="6">
    <location>
        <begin position="291"/>
        <end position="293"/>
    </location>
</feature>
<feature type="helix" evidence="6">
    <location>
        <begin position="304"/>
        <end position="308"/>
    </location>
</feature>
<feature type="helix" evidence="6">
    <location>
        <begin position="332"/>
        <end position="342"/>
    </location>
</feature>
<feature type="strand" evidence="6">
    <location>
        <begin position="346"/>
        <end position="351"/>
    </location>
</feature>
<feature type="helix" evidence="6">
    <location>
        <begin position="353"/>
        <end position="360"/>
    </location>
</feature>
<proteinExistence type="evidence at protein level"/>
<keyword id="KW-0002">3D-structure</keyword>
<keyword id="KW-0106">Calcium</keyword>
<keyword id="KW-0998">Cell outer membrane</keyword>
<keyword id="KW-0319">Glycerol metabolism</keyword>
<keyword id="KW-0378">Hydrolase</keyword>
<keyword id="KW-0449">Lipoprotein</keyword>
<keyword id="KW-0472">Membrane</keyword>
<keyword id="KW-0479">Metal-binding</keyword>
<keyword id="KW-0564">Palmitate</keyword>
<keyword id="KW-1185">Reference proteome</keyword>
<keyword id="KW-0732">Signal</keyword>
<gene>
    <name type="primary">glpQ</name>
    <name type="synonym">hpd</name>
    <name type="ordered locus">HI_0689</name>
</gene>
<comment type="function">
    <text evidence="4">Glycerophosphodiester phosphodiesterase hydrolyzes glycerophosphodiesters into glycerol-3-phosphate (G3P) and the corresponding alcohol. Has a specific affinity for human immunoglobulin D myeloma protein.</text>
</comment>
<comment type="catalytic activity">
    <reaction>
        <text>a sn-glycero-3-phosphodiester + H2O = an alcohol + sn-glycerol 3-phosphate + H(+)</text>
        <dbReference type="Rhea" id="RHEA:12969"/>
        <dbReference type="ChEBI" id="CHEBI:15377"/>
        <dbReference type="ChEBI" id="CHEBI:15378"/>
        <dbReference type="ChEBI" id="CHEBI:30879"/>
        <dbReference type="ChEBI" id="CHEBI:57597"/>
        <dbReference type="ChEBI" id="CHEBI:83408"/>
        <dbReference type="EC" id="3.1.4.46"/>
    </reaction>
</comment>
<comment type="cofactor">
    <cofactor evidence="1">
        <name>Ca(2+)</name>
        <dbReference type="ChEBI" id="CHEBI:29108"/>
    </cofactor>
    <text evidence="1">Binds 1 Ca(2+) ion per subunit.</text>
</comment>
<comment type="subcellular location">
    <subcellularLocation>
        <location>Cell outer membrane</location>
        <topology>Lipid-anchor</topology>
    </subcellularLocation>
</comment>
<comment type="PTM">
    <text>Contains both ester- and amide-linked fatty acids.</text>
</comment>
<comment type="miscellaneous">
    <text>The sequence shown is that of strains NTHI 772 and RD / KW20.</text>
</comment>
<comment type="similarity">
    <text evidence="5">Belongs to the glycerophosphoryl diester phosphodiesterase family.</text>
</comment>
<protein>
    <recommendedName>
        <fullName>Glycerophosphodiester phosphodiesterase</fullName>
        <shortName>Glycerophosphoryl diester phosphodiesterase</shortName>
        <ecNumber>3.1.4.46</ecNumber>
    </recommendedName>
    <alternativeName>
        <fullName>Immunoglobulin D-binding protein</fullName>
        <shortName>IgD-binding protein</shortName>
    </alternativeName>
    <alternativeName>
        <fullName>Surface-exposed lipoprotein D</fullName>
        <shortName>Protein D</shortName>
    </alternativeName>
</protein>
<evidence type="ECO:0000250" key="1">
    <source>
        <dbReference type="UniProtKB" id="P09394"/>
    </source>
</evidence>
<evidence type="ECO:0000250" key="2">
    <source>
        <dbReference type="UniProtKB" id="Q8RB32"/>
    </source>
</evidence>
<evidence type="ECO:0000255" key="3">
    <source>
        <dbReference type="PROSITE-ProRule" id="PRU00303"/>
    </source>
</evidence>
<evidence type="ECO:0000269" key="4">
    <source>
    </source>
</evidence>
<evidence type="ECO:0000305" key="5"/>
<evidence type="ECO:0007829" key="6">
    <source>
        <dbReference type="PDB" id="8CWP"/>
    </source>
</evidence>
<sequence length="364" mass="41902">MKLKTLALSLLAAGVLAGCSSHSSNMANTQMKSDKIIIAHRGASGYLPEHTLESKALAFAQHSDYLEQDLAMTKDGRLVVIHDHFLDGLTDVAKKFPYRHRKDGRYYVIDFTLKEIQSLEMTENFETKDGKQAQVYPNRFPLWKSHFRIHTFEDEIEFIQGLEKSTGKKVGIYPEIKAPWFHHQNGKDIATETLKVLKKYGYDKKTDMVYLQTFDFNELKRIKTELLPQMGMDLKLVQLIAYTDWKETQEKDPKGYWVNYNYDWMFKPGAMAEVVKYADGVGPGWYMLVNKEESKPDNIVYTPLVKELAQYNVEVHPYTVRKDALPEFFTDVNQMYDALLNKSGATGVFTDFPDTGVEFLKGIK</sequence>
<reference key="1">
    <citation type="journal article" date="1995" name="Science">
        <title>Whole-genome random sequencing and assembly of Haemophilus influenzae Rd.</title>
        <authorList>
            <person name="Fleischmann R.D."/>
            <person name="Adams M.D."/>
            <person name="White O."/>
            <person name="Clayton R.A."/>
            <person name="Kirkness E.F."/>
            <person name="Kerlavage A.R."/>
            <person name="Bult C.J."/>
            <person name="Tomb J.-F."/>
            <person name="Dougherty B.A."/>
            <person name="Merrick J.M."/>
            <person name="McKenney K."/>
            <person name="Sutton G.G."/>
            <person name="FitzHugh W."/>
            <person name="Fields C.A."/>
            <person name="Gocayne J.D."/>
            <person name="Scott J.D."/>
            <person name="Shirley R."/>
            <person name="Liu L.-I."/>
            <person name="Glodek A."/>
            <person name="Kelley J.M."/>
            <person name="Weidman J.F."/>
            <person name="Phillips C.A."/>
            <person name="Spriggs T."/>
            <person name="Hedblom E."/>
            <person name="Cotton M.D."/>
            <person name="Utterback T.R."/>
            <person name="Hanna M.C."/>
            <person name="Nguyen D.T."/>
            <person name="Saudek D.M."/>
            <person name="Brandon R.C."/>
            <person name="Fine L.D."/>
            <person name="Fritchman J.L."/>
            <person name="Fuhrmann J.L."/>
            <person name="Geoghagen N.S.M."/>
            <person name="Gnehm C.L."/>
            <person name="McDonald L.A."/>
            <person name="Small K.V."/>
            <person name="Fraser C.M."/>
            <person name="Smith H.O."/>
            <person name="Venter J.C."/>
        </authorList>
    </citation>
    <scope>NUCLEOTIDE SEQUENCE [LARGE SCALE GENOMIC DNA]</scope>
    <source>
        <strain>ATCC 51907 / DSM 11121 / KW20 / Rd</strain>
    </source>
</reference>
<reference key="2">
    <citation type="journal article" date="1991" name="Infect. Immun.">
        <title>Protein D, an immunoglobulin D-binding protein of Haemophilus influenzae: cloning, nucleotide sequence, and expression in Escherichia coli.</title>
        <authorList>
            <person name="Janson H."/>
            <person name="Heden L.-O."/>
            <person name="Grubb A."/>
            <person name="Ruan M."/>
            <person name="Forsgren A."/>
        </authorList>
    </citation>
    <scope>NUCLEOTIDE SEQUENCE [GENOMIC DNA]</scope>
    <source>
        <strain>NTHi 772</strain>
    </source>
</reference>
<reference key="3">
    <citation type="journal article" date="1993" name="Infect. Immun.">
        <title>Limited diversity of the protein D gene (hpd) among encapsulated and nonencapsulated Haemophilus influenzae strains.</title>
        <authorList>
            <person name="Janson H."/>
            <person name="Ruan M."/>
            <person name="Forsgren A."/>
        </authorList>
    </citation>
    <scope>NUCLEOTIDE SEQUENCE [GENOMIC DNA]</scope>
    <source>
        <strain>Minna / Serotype B</strain>
    </source>
</reference>
<reference key="4">
    <citation type="journal article" date="1995" name="Infect. Immun.">
        <title>The gene encoding protein D (hpd) is highly conserved among Haemophilus influenzae type b and nontypeable strains.</title>
        <authorList>
            <person name="Song X.-M."/>
            <person name="Forsgren A."/>
            <person name="Janson H."/>
        </authorList>
    </citation>
    <scope>NUCLEOTIDE SEQUENCE [GENOMIC DNA]</scope>
    <source>
        <strain>3639</strain>
        <strain>3640</strain>
        <strain>6-7626</strain>
        <strain>Eagan / Serotype B</strain>
        <strain>HK695 / Serotype B</strain>
        <strain>NCTC 8468 / Serotype B</strain>
    </source>
</reference>
<reference key="5">
    <citation type="journal article" date="1992" name="Infect. Immun.">
        <title>Protein D, the immunoglobulin D-binding protein of Haemophilus influenzae, is a lipoprotein.</title>
        <authorList>
            <person name="Janson H."/>
            <person name="Heden L.-O."/>
            <person name="Forsgren A."/>
        </authorList>
    </citation>
    <scope>CHARACTERIZATION</scope>
    <scope>DIACYLGLYCEROL AT CYS-19</scope>
    <scope>PALMITOYLATION AT CYS-19</scope>
    <source>
        <strain>NTHi 772</strain>
    </source>
</reference>
<name>GLPQ_HAEIN</name>
<accession>Q06282</accession>
<dbReference type="EC" id="3.1.4.46"/>
<dbReference type="EMBL" id="L42023">
    <property type="protein sequence ID" value="AAC22348.1"/>
    <property type="molecule type" value="Genomic_DNA"/>
</dbReference>
<dbReference type="EMBL" id="M37487">
    <property type="protein sequence ID" value="AAA24998.1"/>
    <property type="molecule type" value="Genomic_DNA"/>
</dbReference>
<dbReference type="EMBL" id="L12445">
    <property type="protein sequence ID" value="AAA24999.1"/>
    <property type="molecule type" value="Genomic_DNA"/>
</dbReference>
<dbReference type="EMBL" id="Z35656">
    <property type="protein sequence ID" value="CAA84715.1"/>
    <property type="molecule type" value="Genomic_DNA"/>
</dbReference>
<dbReference type="EMBL" id="Z35657">
    <property type="protein sequence ID" value="CAA84716.1"/>
    <property type="molecule type" value="Genomic_DNA"/>
</dbReference>
<dbReference type="EMBL" id="Z35658">
    <property type="protein sequence ID" value="CAA84717.1"/>
    <property type="molecule type" value="Genomic_DNA"/>
</dbReference>
<dbReference type="EMBL" id="Z35659">
    <property type="protein sequence ID" value="CAA84718.1"/>
    <property type="molecule type" value="Genomic_DNA"/>
</dbReference>
<dbReference type="EMBL" id="Z35660">
    <property type="protein sequence ID" value="CAA84719.1"/>
    <property type="molecule type" value="Genomic_DNA"/>
</dbReference>
<dbReference type="EMBL" id="Z35661">
    <property type="protein sequence ID" value="CAA84720.1"/>
    <property type="molecule type" value="Genomic_DNA"/>
</dbReference>
<dbReference type="PIR" id="G64086">
    <property type="entry name" value="G64086"/>
</dbReference>
<dbReference type="PIR" id="S59931">
    <property type="entry name" value="S59931"/>
</dbReference>
<dbReference type="PIR" id="S59932">
    <property type="entry name" value="S59932"/>
</dbReference>
<dbReference type="PIR" id="S59933">
    <property type="entry name" value="S59933"/>
</dbReference>
<dbReference type="PIR" id="S59934">
    <property type="entry name" value="S59934"/>
</dbReference>
<dbReference type="PIR" id="S59936">
    <property type="entry name" value="S59936"/>
</dbReference>
<dbReference type="RefSeq" id="NP_438849.1">
    <property type="nucleotide sequence ID" value="NC_000907.1"/>
</dbReference>
<dbReference type="PDB" id="8CWP">
    <property type="method" value="X-ray"/>
    <property type="resolution" value="1.80 A"/>
    <property type="chains" value="A=20-364"/>
</dbReference>
<dbReference type="PDBsum" id="8CWP"/>
<dbReference type="SMR" id="Q06282"/>
<dbReference type="STRING" id="71421.HI_0689"/>
<dbReference type="EnsemblBacteria" id="AAC22348">
    <property type="protein sequence ID" value="AAC22348"/>
    <property type="gene ID" value="HI_0689"/>
</dbReference>
<dbReference type="KEGG" id="hin:HI_0689"/>
<dbReference type="PATRIC" id="fig|71421.8.peg.720"/>
<dbReference type="eggNOG" id="COG0584">
    <property type="taxonomic scope" value="Bacteria"/>
</dbReference>
<dbReference type="HOGENOM" id="CLU_030226_1_0_6"/>
<dbReference type="OrthoDB" id="9795622at2"/>
<dbReference type="PhylomeDB" id="Q06282"/>
<dbReference type="BioCyc" id="HINF71421:G1GJ1-724-MONOMER"/>
<dbReference type="BRENDA" id="3.1.4.46">
    <property type="organism ID" value="2529"/>
</dbReference>
<dbReference type="Proteomes" id="UP000000579">
    <property type="component" value="Chromosome"/>
</dbReference>
<dbReference type="GO" id="GO:0009279">
    <property type="term" value="C:cell outer membrane"/>
    <property type="evidence" value="ECO:0007669"/>
    <property type="project" value="UniProtKB-SubCell"/>
</dbReference>
<dbReference type="GO" id="GO:0042597">
    <property type="term" value="C:periplasmic space"/>
    <property type="evidence" value="ECO:0000318"/>
    <property type="project" value="GO_Central"/>
</dbReference>
<dbReference type="GO" id="GO:0008889">
    <property type="term" value="F:glycerophosphodiester phosphodiesterase activity"/>
    <property type="evidence" value="ECO:0000318"/>
    <property type="project" value="GO_Central"/>
</dbReference>
<dbReference type="GO" id="GO:0046872">
    <property type="term" value="F:metal ion binding"/>
    <property type="evidence" value="ECO:0007669"/>
    <property type="project" value="UniProtKB-KW"/>
</dbReference>
<dbReference type="GO" id="GO:0006071">
    <property type="term" value="P:glycerol metabolic process"/>
    <property type="evidence" value="ECO:0007669"/>
    <property type="project" value="UniProtKB-KW"/>
</dbReference>
<dbReference type="GO" id="GO:0006629">
    <property type="term" value="P:lipid metabolic process"/>
    <property type="evidence" value="ECO:0007669"/>
    <property type="project" value="InterPro"/>
</dbReference>
<dbReference type="CDD" id="cd08600">
    <property type="entry name" value="GDPD_EcGlpQ_like"/>
    <property type="match status" value="1"/>
</dbReference>
<dbReference type="FunFam" id="3.20.20.190:FF:000009">
    <property type="entry name" value="Glycerophosphodiester phosphodiesterase, periplasmic"/>
    <property type="match status" value="1"/>
</dbReference>
<dbReference type="Gene3D" id="3.20.20.190">
    <property type="entry name" value="Phosphatidylinositol (PI) phosphodiesterase"/>
    <property type="match status" value="1"/>
</dbReference>
<dbReference type="InterPro" id="IPR030395">
    <property type="entry name" value="GP_PDE_dom"/>
</dbReference>
<dbReference type="InterPro" id="IPR017946">
    <property type="entry name" value="PLC-like_Pdiesterase_TIM-brl"/>
</dbReference>
<dbReference type="NCBIfam" id="NF008354">
    <property type="entry name" value="PRK11143.1"/>
    <property type="match status" value="1"/>
</dbReference>
<dbReference type="PANTHER" id="PTHR43620:SF7">
    <property type="entry name" value="GLYCEROPHOSPHODIESTER PHOSPHODIESTERASE GDPD5-RELATED"/>
    <property type="match status" value="1"/>
</dbReference>
<dbReference type="PANTHER" id="PTHR43620">
    <property type="entry name" value="GLYCEROPHOSPHORYL DIESTER PHOSPHODIESTERASE"/>
    <property type="match status" value="1"/>
</dbReference>
<dbReference type="Pfam" id="PF03009">
    <property type="entry name" value="GDPD"/>
    <property type="match status" value="1"/>
</dbReference>
<dbReference type="SUPFAM" id="SSF51695">
    <property type="entry name" value="PLC-like phosphodiesterases"/>
    <property type="match status" value="1"/>
</dbReference>
<dbReference type="PROSITE" id="PS51704">
    <property type="entry name" value="GP_PDE"/>
    <property type="match status" value="1"/>
</dbReference>
<dbReference type="PROSITE" id="PS51257">
    <property type="entry name" value="PROKAR_LIPOPROTEIN"/>
    <property type="match status" value="1"/>
</dbReference>
<organism>
    <name type="scientific">Haemophilus influenzae (strain ATCC 51907 / DSM 11121 / KW20 / Rd)</name>
    <dbReference type="NCBI Taxonomy" id="71421"/>
    <lineage>
        <taxon>Bacteria</taxon>
        <taxon>Pseudomonadati</taxon>
        <taxon>Pseudomonadota</taxon>
        <taxon>Gammaproteobacteria</taxon>
        <taxon>Pasteurellales</taxon>
        <taxon>Pasteurellaceae</taxon>
        <taxon>Haemophilus</taxon>
    </lineage>
</organism>